<accession>A6TZ17</accession>
<name>RL7_STAA2</name>
<comment type="function">
    <text evidence="1">Forms part of the ribosomal stalk which helps the ribosome interact with GTP-bound translation factors. Is thus essential for accurate translation.</text>
</comment>
<comment type="subunit">
    <text evidence="1">Homodimer. Part of the ribosomal stalk of the 50S ribosomal subunit. Forms a multimeric L10(L12)X complex, where L10 forms an elongated spine to which 2 to 4 L12 dimers bind in a sequential fashion. Binds GTP-bound translation factors.</text>
</comment>
<comment type="similarity">
    <text evidence="1">Belongs to the bacterial ribosomal protein bL12 family.</text>
</comment>
<proteinExistence type="inferred from homology"/>
<reference key="1">
    <citation type="submission" date="2007-06" db="EMBL/GenBank/DDBJ databases">
        <title>Complete sequence of chromosome of Staphylococcus aureus subsp. aureus JH1.</title>
        <authorList>
            <consortium name="US DOE Joint Genome Institute"/>
            <person name="Copeland A."/>
            <person name="Lucas S."/>
            <person name="Lapidus A."/>
            <person name="Barry K."/>
            <person name="Detter J.C."/>
            <person name="Glavina del Rio T."/>
            <person name="Hammon N."/>
            <person name="Israni S."/>
            <person name="Dalin E."/>
            <person name="Tice H."/>
            <person name="Pitluck S."/>
            <person name="Chain P."/>
            <person name="Malfatti S."/>
            <person name="Shin M."/>
            <person name="Vergez L."/>
            <person name="Schmutz J."/>
            <person name="Larimer F."/>
            <person name="Land M."/>
            <person name="Hauser L."/>
            <person name="Kyrpides N."/>
            <person name="Ivanova N."/>
            <person name="Tomasz A."/>
            <person name="Richardson P."/>
        </authorList>
    </citation>
    <scope>NUCLEOTIDE SEQUENCE [LARGE SCALE GENOMIC DNA]</scope>
    <source>
        <strain>JH1</strain>
    </source>
</reference>
<keyword id="KW-0687">Ribonucleoprotein</keyword>
<keyword id="KW-0689">Ribosomal protein</keyword>
<organism>
    <name type="scientific">Staphylococcus aureus (strain JH1)</name>
    <dbReference type="NCBI Taxonomy" id="359787"/>
    <lineage>
        <taxon>Bacteria</taxon>
        <taxon>Bacillati</taxon>
        <taxon>Bacillota</taxon>
        <taxon>Bacilli</taxon>
        <taxon>Bacillales</taxon>
        <taxon>Staphylococcaceae</taxon>
        <taxon>Staphylococcus</taxon>
    </lineage>
</organism>
<protein>
    <recommendedName>
        <fullName evidence="1">Large ribosomal subunit protein bL12</fullName>
    </recommendedName>
    <alternativeName>
        <fullName evidence="2">50S ribosomal protein L7/L12</fullName>
    </alternativeName>
</protein>
<sequence>MANHEQIIEAIKEMSVLELNDLVKAIEEEFGVTAAAPVAVAGAAGGADAAAEKTEFDVELTSAGSSKIKVVKAVKEATGLGLKDAKELVDGAPKVIKEALPKEEAEKLKEQLEEVGATVELK</sequence>
<gene>
    <name evidence="1" type="primary">rplL</name>
    <name type="ordered locus">SaurJH1_0577</name>
</gene>
<feature type="chain" id="PRO_1000079814" description="Large ribosomal subunit protein bL12">
    <location>
        <begin position="1"/>
        <end position="122"/>
    </location>
</feature>
<evidence type="ECO:0000255" key="1">
    <source>
        <dbReference type="HAMAP-Rule" id="MF_00368"/>
    </source>
</evidence>
<evidence type="ECO:0000305" key="2"/>
<dbReference type="EMBL" id="CP000736">
    <property type="protein sequence ID" value="ABR51435.1"/>
    <property type="molecule type" value="Genomic_DNA"/>
</dbReference>
<dbReference type="SMR" id="A6TZ17"/>
<dbReference type="KEGG" id="sah:SaurJH1_0577"/>
<dbReference type="HOGENOM" id="CLU_086499_3_2_9"/>
<dbReference type="GO" id="GO:0022625">
    <property type="term" value="C:cytosolic large ribosomal subunit"/>
    <property type="evidence" value="ECO:0007669"/>
    <property type="project" value="TreeGrafter"/>
</dbReference>
<dbReference type="GO" id="GO:0003729">
    <property type="term" value="F:mRNA binding"/>
    <property type="evidence" value="ECO:0007669"/>
    <property type="project" value="TreeGrafter"/>
</dbReference>
<dbReference type="GO" id="GO:0003735">
    <property type="term" value="F:structural constituent of ribosome"/>
    <property type="evidence" value="ECO:0007669"/>
    <property type="project" value="InterPro"/>
</dbReference>
<dbReference type="GO" id="GO:0006412">
    <property type="term" value="P:translation"/>
    <property type="evidence" value="ECO:0007669"/>
    <property type="project" value="UniProtKB-UniRule"/>
</dbReference>
<dbReference type="CDD" id="cd00387">
    <property type="entry name" value="Ribosomal_L7_L12"/>
    <property type="match status" value="1"/>
</dbReference>
<dbReference type="FunFam" id="1.20.5.710:FF:000002">
    <property type="entry name" value="50S ribosomal protein L7/L12"/>
    <property type="match status" value="1"/>
</dbReference>
<dbReference type="FunFam" id="3.30.1390.10:FF:000001">
    <property type="entry name" value="50S ribosomal protein L7/L12"/>
    <property type="match status" value="1"/>
</dbReference>
<dbReference type="Gene3D" id="3.30.1390.10">
    <property type="match status" value="1"/>
</dbReference>
<dbReference type="Gene3D" id="1.20.5.710">
    <property type="entry name" value="Single helix bin"/>
    <property type="match status" value="1"/>
</dbReference>
<dbReference type="HAMAP" id="MF_00368">
    <property type="entry name" value="Ribosomal_bL12"/>
    <property type="match status" value="1"/>
</dbReference>
<dbReference type="InterPro" id="IPR000206">
    <property type="entry name" value="Ribosomal_bL12"/>
</dbReference>
<dbReference type="InterPro" id="IPR013823">
    <property type="entry name" value="Ribosomal_bL12_C"/>
</dbReference>
<dbReference type="InterPro" id="IPR014719">
    <property type="entry name" value="Ribosomal_bL12_C/ClpS-like"/>
</dbReference>
<dbReference type="InterPro" id="IPR008932">
    <property type="entry name" value="Ribosomal_bL12_oligo"/>
</dbReference>
<dbReference type="InterPro" id="IPR036235">
    <property type="entry name" value="Ribosomal_bL12_oligo_N_sf"/>
</dbReference>
<dbReference type="NCBIfam" id="TIGR00855">
    <property type="entry name" value="L12"/>
    <property type="match status" value="1"/>
</dbReference>
<dbReference type="PANTHER" id="PTHR45987">
    <property type="entry name" value="39S RIBOSOMAL PROTEIN L12"/>
    <property type="match status" value="1"/>
</dbReference>
<dbReference type="PANTHER" id="PTHR45987:SF4">
    <property type="entry name" value="LARGE RIBOSOMAL SUBUNIT PROTEIN BL12M"/>
    <property type="match status" value="1"/>
</dbReference>
<dbReference type="Pfam" id="PF00542">
    <property type="entry name" value="Ribosomal_L12"/>
    <property type="match status" value="1"/>
</dbReference>
<dbReference type="Pfam" id="PF16320">
    <property type="entry name" value="Ribosomal_L12_N"/>
    <property type="match status" value="1"/>
</dbReference>
<dbReference type="SUPFAM" id="SSF54736">
    <property type="entry name" value="ClpS-like"/>
    <property type="match status" value="1"/>
</dbReference>
<dbReference type="SUPFAM" id="SSF48300">
    <property type="entry name" value="Ribosomal protein L7/12, oligomerisation (N-terminal) domain"/>
    <property type="match status" value="1"/>
</dbReference>